<organism>
    <name type="scientific">Rattus norvegicus</name>
    <name type="common">Rat</name>
    <dbReference type="NCBI Taxonomy" id="10116"/>
    <lineage>
        <taxon>Eukaryota</taxon>
        <taxon>Metazoa</taxon>
        <taxon>Chordata</taxon>
        <taxon>Craniata</taxon>
        <taxon>Vertebrata</taxon>
        <taxon>Euteleostomi</taxon>
        <taxon>Mammalia</taxon>
        <taxon>Eutheria</taxon>
        <taxon>Euarchontoglires</taxon>
        <taxon>Glires</taxon>
        <taxon>Rodentia</taxon>
        <taxon>Myomorpha</taxon>
        <taxon>Muroidea</taxon>
        <taxon>Muridae</taxon>
        <taxon>Murinae</taxon>
        <taxon>Rattus</taxon>
    </lineage>
</organism>
<accession>P53813</accession>
<gene>
    <name type="primary">Pros1</name>
    <name type="synonym">Pros</name>
</gene>
<evidence type="ECO:0000250" key="1"/>
<evidence type="ECO:0000250" key="2">
    <source>
        <dbReference type="UniProtKB" id="P07224"/>
    </source>
</evidence>
<evidence type="ECO:0000255" key="3"/>
<evidence type="ECO:0000255" key="4">
    <source>
        <dbReference type="PROSITE-ProRule" id="PRU00076"/>
    </source>
</evidence>
<evidence type="ECO:0000255" key="5">
    <source>
        <dbReference type="PROSITE-ProRule" id="PRU00122"/>
    </source>
</evidence>
<evidence type="ECO:0000255" key="6">
    <source>
        <dbReference type="PROSITE-ProRule" id="PRU00463"/>
    </source>
</evidence>
<keyword id="KW-0094">Blood coagulation</keyword>
<keyword id="KW-0106">Calcium</keyword>
<keyword id="KW-0165">Cleavage on pair of basic residues</keyword>
<keyword id="KW-1015">Disulfide bond</keyword>
<keyword id="KW-0245">EGF-like domain</keyword>
<keyword id="KW-0280">Fibrinolysis</keyword>
<keyword id="KW-0301">Gamma-carboxyglutamic acid</keyword>
<keyword id="KW-0325">Glycoprotein</keyword>
<keyword id="KW-0356">Hemostasis</keyword>
<keyword id="KW-0379">Hydroxylation</keyword>
<keyword id="KW-1185">Reference proteome</keyword>
<keyword id="KW-0677">Repeat</keyword>
<keyword id="KW-0964">Secreted</keyword>
<keyword id="KW-0732">Signal</keyword>
<keyword id="KW-0865">Zymogen</keyword>
<proteinExistence type="evidence at transcript level"/>
<name>PROS_RAT</name>
<feature type="signal peptide" evidence="1">
    <location>
        <begin position="1"/>
        <end position="24"/>
    </location>
</feature>
<feature type="propeptide" id="PRO_0000022127" evidence="1">
    <location>
        <begin position="25"/>
        <end position="41"/>
    </location>
</feature>
<feature type="chain" id="PRO_0000022128" description="Vitamin K-dependent protein S">
    <location>
        <begin position="42"/>
        <end position="675"/>
    </location>
</feature>
<feature type="domain" description="Gla" evidence="6">
    <location>
        <begin position="42"/>
        <end position="87"/>
    </location>
</feature>
<feature type="domain" description="EGF-like 1" evidence="4">
    <location>
        <begin position="117"/>
        <end position="155"/>
    </location>
</feature>
<feature type="domain" description="EGF-like 2; calcium-binding" evidence="4">
    <location>
        <begin position="157"/>
        <end position="200"/>
    </location>
</feature>
<feature type="domain" description="EGF-like 3; calcium-binding" evidence="4">
    <location>
        <begin position="201"/>
        <end position="242"/>
    </location>
</feature>
<feature type="domain" description="EGF-like 4; calcium-binding" evidence="4">
    <location>
        <begin position="243"/>
        <end position="283"/>
    </location>
</feature>
<feature type="domain" description="Laminin G-like 1" evidence="5">
    <location>
        <begin position="299"/>
        <end position="475"/>
    </location>
</feature>
<feature type="domain" description="Laminin G-like 2" evidence="5">
    <location>
        <begin position="484"/>
        <end position="665"/>
    </location>
</feature>
<feature type="region of interest" description="Thrombin-sensitive">
    <location>
        <begin position="88"/>
        <end position="116"/>
    </location>
</feature>
<feature type="modified residue" description="4-carboxyglutamate" evidence="2 6">
    <location>
        <position position="47"/>
    </location>
</feature>
<feature type="modified residue" description="4-carboxyglutamate" evidence="2 6">
    <location>
        <position position="48"/>
    </location>
</feature>
<feature type="modified residue" description="4-carboxyglutamate" evidence="2 6">
    <location>
        <position position="55"/>
    </location>
</feature>
<feature type="modified residue" description="4-carboxyglutamate" evidence="2 6">
    <location>
        <position position="57"/>
    </location>
</feature>
<feature type="modified residue" description="4-carboxyglutamate" evidence="2 6">
    <location>
        <position position="60"/>
    </location>
</feature>
<feature type="modified residue" description="4-carboxyglutamate" evidence="2 6">
    <location>
        <position position="61"/>
    </location>
</feature>
<feature type="modified residue" description="4-carboxyglutamate" evidence="2 6">
    <location>
        <position position="66"/>
    </location>
</feature>
<feature type="modified residue" description="4-carboxyglutamate" evidence="2 6">
    <location>
        <position position="67"/>
    </location>
</feature>
<feature type="modified residue" description="4-carboxyglutamate" evidence="2 6">
    <location>
        <position position="70"/>
    </location>
</feature>
<feature type="modified residue" description="4-carboxyglutamate" evidence="2 6">
    <location>
        <position position="73"/>
    </location>
</feature>
<feature type="modified residue" description="4-carboxyglutamate" evidence="2 6">
    <location>
        <position position="77"/>
    </location>
</feature>
<feature type="modified residue" description="(3R)-3-hydroxyaspartate" evidence="1">
    <location>
        <position position="136"/>
    </location>
</feature>
<feature type="glycosylation site" description="N-linked (GlcNAc...) asparagine" evidence="3">
    <location>
        <position position="499"/>
    </location>
</feature>
<feature type="glycosylation site" description="N-linked (GlcNAc...) asparagine" evidence="3">
    <location>
        <position position="509"/>
    </location>
</feature>
<feature type="disulfide bond" evidence="1">
    <location>
        <begin position="58"/>
        <end position="63"/>
    </location>
</feature>
<feature type="disulfide bond" evidence="1">
    <location>
        <begin position="121"/>
        <end position="134"/>
    </location>
</feature>
<feature type="disulfide bond" evidence="1">
    <location>
        <begin position="126"/>
        <end position="143"/>
    </location>
</feature>
<feature type="disulfide bond" evidence="1">
    <location>
        <begin position="145"/>
        <end position="154"/>
    </location>
</feature>
<feature type="disulfide bond" evidence="1">
    <location>
        <begin position="161"/>
        <end position="175"/>
    </location>
</feature>
<feature type="disulfide bond" evidence="1">
    <location>
        <begin position="171"/>
        <end position="184"/>
    </location>
</feature>
<feature type="disulfide bond" evidence="1">
    <location>
        <begin position="186"/>
        <end position="199"/>
    </location>
</feature>
<feature type="disulfide bond" evidence="1">
    <location>
        <begin position="205"/>
        <end position="217"/>
    </location>
</feature>
<feature type="disulfide bond" evidence="1">
    <location>
        <begin position="212"/>
        <end position="226"/>
    </location>
</feature>
<feature type="disulfide bond" evidence="1">
    <location>
        <begin position="228"/>
        <end position="241"/>
    </location>
</feature>
<feature type="disulfide bond" evidence="1">
    <location>
        <begin position="247"/>
        <end position="256"/>
    </location>
</feature>
<feature type="disulfide bond" evidence="1">
    <location>
        <begin position="252"/>
        <end position="265"/>
    </location>
</feature>
<feature type="disulfide bond" evidence="1">
    <location>
        <begin position="267"/>
        <end position="282"/>
    </location>
</feature>
<feature type="disulfide bond" evidence="1">
    <location>
        <begin position="449"/>
        <end position="475"/>
    </location>
</feature>
<protein>
    <recommendedName>
        <fullName>Vitamin K-dependent protein S</fullName>
    </recommendedName>
</protein>
<dbReference type="EMBL" id="S78744">
    <property type="protein sequence ID" value="AAC60704.1"/>
    <property type="molecule type" value="mRNA"/>
</dbReference>
<dbReference type="PIR" id="JC4180">
    <property type="entry name" value="KXRTS"/>
</dbReference>
<dbReference type="SMR" id="P53813"/>
<dbReference type="FunCoup" id="P53813">
    <property type="interactions" value="415"/>
</dbReference>
<dbReference type="STRING" id="10116.ENSRNOP00000064737"/>
<dbReference type="GlyCosmos" id="P53813">
    <property type="glycosylation" value="2 sites, No reported glycans"/>
</dbReference>
<dbReference type="GlyGen" id="P53813">
    <property type="glycosylation" value="2 sites"/>
</dbReference>
<dbReference type="iPTMnet" id="P53813"/>
<dbReference type="PhosphoSitePlus" id="P53813"/>
<dbReference type="PaxDb" id="10116-ENSRNOP00000064737"/>
<dbReference type="AGR" id="RGD:620971"/>
<dbReference type="RGD" id="620971">
    <property type="gene designation" value="Pros1"/>
</dbReference>
<dbReference type="eggNOG" id="ENOG502QSNF">
    <property type="taxonomic scope" value="Eukaryota"/>
</dbReference>
<dbReference type="InParanoid" id="P53813"/>
<dbReference type="PhylomeDB" id="P53813"/>
<dbReference type="Reactome" id="R-RNO-114608">
    <property type="pathway name" value="Platelet degranulation"/>
</dbReference>
<dbReference type="Reactome" id="R-RNO-140837">
    <property type="pathway name" value="Intrinsic Pathway of Fibrin Clot Formation"/>
</dbReference>
<dbReference type="Reactome" id="R-RNO-140875">
    <property type="pathway name" value="Common Pathway of Fibrin Clot Formation"/>
</dbReference>
<dbReference type="Reactome" id="R-RNO-159740">
    <property type="pathway name" value="Gamma-carboxylation of protein precursors"/>
</dbReference>
<dbReference type="Reactome" id="R-RNO-159763">
    <property type="pathway name" value="Transport of gamma-carboxylated protein precursors from the endoplasmic reticulum to the Golgi apparatus"/>
</dbReference>
<dbReference type="Reactome" id="R-RNO-159782">
    <property type="pathway name" value="Removal of aminoterminal propeptides from gamma-carboxylated proteins"/>
</dbReference>
<dbReference type="Reactome" id="R-RNO-202733">
    <property type="pathway name" value="Cell surface interactions at the vascular wall"/>
</dbReference>
<dbReference type="PRO" id="PR:P53813"/>
<dbReference type="Proteomes" id="UP000002494">
    <property type="component" value="Unplaced"/>
</dbReference>
<dbReference type="GO" id="GO:0005615">
    <property type="term" value="C:extracellular space"/>
    <property type="evidence" value="ECO:0000314"/>
    <property type="project" value="RGD"/>
</dbReference>
<dbReference type="GO" id="GO:0032991">
    <property type="term" value="C:protein-containing complex"/>
    <property type="evidence" value="ECO:0000314"/>
    <property type="project" value="RGD"/>
</dbReference>
<dbReference type="GO" id="GO:0005509">
    <property type="term" value="F:calcium ion binding"/>
    <property type="evidence" value="ECO:0007669"/>
    <property type="project" value="InterPro"/>
</dbReference>
<dbReference type="GO" id="GO:0044877">
    <property type="term" value="F:protein-containing complex binding"/>
    <property type="evidence" value="ECO:0000314"/>
    <property type="project" value="RGD"/>
</dbReference>
<dbReference type="GO" id="GO:0007596">
    <property type="term" value="P:blood coagulation"/>
    <property type="evidence" value="ECO:0007669"/>
    <property type="project" value="UniProtKB-KW"/>
</dbReference>
<dbReference type="GO" id="GO:0042730">
    <property type="term" value="P:fibrinolysis"/>
    <property type="evidence" value="ECO:0007669"/>
    <property type="project" value="UniProtKB-KW"/>
</dbReference>
<dbReference type="GO" id="GO:0001889">
    <property type="term" value="P:liver development"/>
    <property type="evidence" value="ECO:0000270"/>
    <property type="project" value="RGD"/>
</dbReference>
<dbReference type="GO" id="GO:0050819">
    <property type="term" value="P:negative regulation of coagulation"/>
    <property type="evidence" value="ECO:0000314"/>
    <property type="project" value="RGD"/>
</dbReference>
<dbReference type="GO" id="GO:0050766">
    <property type="term" value="P:positive regulation of phagocytosis"/>
    <property type="evidence" value="ECO:0000314"/>
    <property type="project" value="RGD"/>
</dbReference>
<dbReference type="GO" id="GO:0051897">
    <property type="term" value="P:positive regulation of phosphatidylinositol 3-kinase/protein kinase B signal transduction"/>
    <property type="evidence" value="ECO:0000266"/>
    <property type="project" value="RGD"/>
</dbReference>
<dbReference type="GO" id="GO:0048678">
    <property type="term" value="P:response to axon injury"/>
    <property type="evidence" value="ECO:0000270"/>
    <property type="project" value="RGD"/>
</dbReference>
<dbReference type="GO" id="GO:0032496">
    <property type="term" value="P:response to lipopolysaccharide"/>
    <property type="evidence" value="ECO:0000270"/>
    <property type="project" value="RGD"/>
</dbReference>
<dbReference type="CDD" id="cd00054">
    <property type="entry name" value="EGF_CA"/>
    <property type="match status" value="3"/>
</dbReference>
<dbReference type="CDD" id="cd00110">
    <property type="entry name" value="LamG"/>
    <property type="match status" value="1"/>
</dbReference>
<dbReference type="FunFam" id="2.10.25.10:FF:000240">
    <property type="entry name" value="Vitamin K-dependent protein S"/>
    <property type="match status" value="1"/>
</dbReference>
<dbReference type="FunFam" id="2.10.25.10:FF:000426">
    <property type="entry name" value="Vitamin K-dependent protein S"/>
    <property type="match status" value="1"/>
</dbReference>
<dbReference type="FunFam" id="2.10.25.10:FF:000631">
    <property type="entry name" value="Vitamin K-dependent protein S"/>
    <property type="match status" value="1"/>
</dbReference>
<dbReference type="FunFam" id="2.60.120.200:FF:000129">
    <property type="entry name" value="Vitamin K-dependent protein S"/>
    <property type="match status" value="1"/>
</dbReference>
<dbReference type="FunFam" id="2.60.120.200:FF:000077">
    <property type="entry name" value="vitamin K-dependent protein S"/>
    <property type="match status" value="1"/>
</dbReference>
<dbReference type="FunFam" id="4.10.740.10:FF:000001">
    <property type="entry name" value="vitamin K-dependent protein S"/>
    <property type="match status" value="1"/>
</dbReference>
<dbReference type="Gene3D" id="2.60.120.200">
    <property type="match status" value="2"/>
</dbReference>
<dbReference type="Gene3D" id="4.10.740.10">
    <property type="entry name" value="Coagulation Factor IX"/>
    <property type="match status" value="1"/>
</dbReference>
<dbReference type="Gene3D" id="2.10.25.10">
    <property type="entry name" value="Laminin"/>
    <property type="match status" value="4"/>
</dbReference>
<dbReference type="InterPro" id="IPR017857">
    <property type="entry name" value="Coagulation_fac-like_Gla_dom"/>
</dbReference>
<dbReference type="InterPro" id="IPR013320">
    <property type="entry name" value="ConA-like_dom_sf"/>
</dbReference>
<dbReference type="InterPro" id="IPR001881">
    <property type="entry name" value="EGF-like_Ca-bd_dom"/>
</dbReference>
<dbReference type="InterPro" id="IPR000742">
    <property type="entry name" value="EGF-like_dom"/>
</dbReference>
<dbReference type="InterPro" id="IPR000152">
    <property type="entry name" value="EGF-type_Asp/Asn_hydroxyl_site"/>
</dbReference>
<dbReference type="InterPro" id="IPR018097">
    <property type="entry name" value="EGF_Ca-bd_CS"/>
</dbReference>
<dbReference type="InterPro" id="IPR051145">
    <property type="entry name" value="GAS-SHBG-PROS"/>
</dbReference>
<dbReference type="InterPro" id="IPR035972">
    <property type="entry name" value="GLA-like_dom_SF"/>
</dbReference>
<dbReference type="InterPro" id="IPR000294">
    <property type="entry name" value="GLA_domain"/>
</dbReference>
<dbReference type="InterPro" id="IPR009030">
    <property type="entry name" value="Growth_fac_rcpt_cys_sf"/>
</dbReference>
<dbReference type="InterPro" id="IPR001791">
    <property type="entry name" value="Laminin_G"/>
</dbReference>
<dbReference type="InterPro" id="IPR049883">
    <property type="entry name" value="NOTCH1_EGF-like"/>
</dbReference>
<dbReference type="PANTHER" id="PTHR24040">
    <property type="entry name" value="LAMININ G-LIKE DOMAIN-CONTAINING PROTEIN"/>
    <property type="match status" value="1"/>
</dbReference>
<dbReference type="PANTHER" id="PTHR24040:SF0">
    <property type="entry name" value="VITAMIN K-DEPENDENT PROTEIN S"/>
    <property type="match status" value="1"/>
</dbReference>
<dbReference type="Pfam" id="PF00008">
    <property type="entry name" value="EGF"/>
    <property type="match status" value="1"/>
</dbReference>
<dbReference type="Pfam" id="PF07645">
    <property type="entry name" value="EGF_CA"/>
    <property type="match status" value="2"/>
</dbReference>
<dbReference type="Pfam" id="PF14670">
    <property type="entry name" value="FXa_inhibition"/>
    <property type="match status" value="1"/>
</dbReference>
<dbReference type="Pfam" id="PF00594">
    <property type="entry name" value="Gla"/>
    <property type="match status" value="1"/>
</dbReference>
<dbReference type="Pfam" id="PF00054">
    <property type="entry name" value="Laminin_G_1"/>
    <property type="match status" value="1"/>
</dbReference>
<dbReference type="PRINTS" id="PR00001">
    <property type="entry name" value="GLABLOOD"/>
</dbReference>
<dbReference type="SMART" id="SM00181">
    <property type="entry name" value="EGF"/>
    <property type="match status" value="4"/>
</dbReference>
<dbReference type="SMART" id="SM00179">
    <property type="entry name" value="EGF_CA"/>
    <property type="match status" value="4"/>
</dbReference>
<dbReference type="SMART" id="SM00069">
    <property type="entry name" value="GLA"/>
    <property type="match status" value="1"/>
</dbReference>
<dbReference type="SMART" id="SM00282">
    <property type="entry name" value="LamG"/>
    <property type="match status" value="2"/>
</dbReference>
<dbReference type="SUPFAM" id="SSF49899">
    <property type="entry name" value="Concanavalin A-like lectins/glucanases"/>
    <property type="match status" value="2"/>
</dbReference>
<dbReference type="SUPFAM" id="SSF57630">
    <property type="entry name" value="GLA-domain"/>
    <property type="match status" value="1"/>
</dbReference>
<dbReference type="SUPFAM" id="SSF57184">
    <property type="entry name" value="Growth factor receptor domain"/>
    <property type="match status" value="1"/>
</dbReference>
<dbReference type="PROSITE" id="PS00010">
    <property type="entry name" value="ASX_HYDROXYL"/>
    <property type="match status" value="4"/>
</dbReference>
<dbReference type="PROSITE" id="PS00022">
    <property type="entry name" value="EGF_1"/>
    <property type="match status" value="1"/>
</dbReference>
<dbReference type="PROSITE" id="PS01186">
    <property type="entry name" value="EGF_2"/>
    <property type="match status" value="3"/>
</dbReference>
<dbReference type="PROSITE" id="PS50026">
    <property type="entry name" value="EGF_3"/>
    <property type="match status" value="4"/>
</dbReference>
<dbReference type="PROSITE" id="PS01187">
    <property type="entry name" value="EGF_CA"/>
    <property type="match status" value="3"/>
</dbReference>
<dbReference type="PROSITE" id="PS00011">
    <property type="entry name" value="GLA_1"/>
    <property type="match status" value="1"/>
</dbReference>
<dbReference type="PROSITE" id="PS50998">
    <property type="entry name" value="GLA_2"/>
    <property type="match status" value="1"/>
</dbReference>
<dbReference type="PROSITE" id="PS50025">
    <property type="entry name" value="LAM_G_DOMAIN"/>
    <property type="match status" value="1"/>
</dbReference>
<comment type="function">
    <text>Anticoagulant plasma protein; it is a cofactor to activated protein C in the degradation of coagulation factors Va and VIIIa. It helps to prevent coagulation and stimulating fibrinolysis.</text>
</comment>
<comment type="subcellular location">
    <subcellularLocation>
        <location>Secreted</location>
    </subcellularLocation>
</comment>
<comment type="tissue specificity">
    <text>Plasma.</text>
</comment>
<comment type="PTM">
    <text evidence="1">The iron and 2-oxoglutarate dependent 3-hydroxylation of aspartate and asparagine is (R) stereospecific within EGF domains.</text>
</comment>
<reference key="1">
    <citation type="journal article" date="1995" name="J. Biochem.">
        <title>Molecular cloning and functional characterization of rat plasma protein S.</title>
        <authorList>
            <person name="Yasuda F."/>
            <person name="Hayashi T."/>
            <person name="Tanitame K."/>
            <person name="Nishioka J."/>
            <person name="Suzuki K."/>
        </authorList>
    </citation>
    <scope>NUCLEOTIDE SEQUENCE [MRNA]</scope>
    <source>
        <tissue>Liver</tissue>
    </source>
</reference>
<sequence length="675" mass="74627">MRVLSVRFRVLLACLALVLPNSETNFLSKERASQVLVRKRRANTLLEETKKGNLERECIEELCNKEEAREVFENNPETDYFYPKYLGCLGAFRVGAFSAARQSANAYPDLRSCVNAIPDQCDPMPCNEDGYLSCKDGQGAFTCICKPGWQGDKCQFDINECKDPSNINGGCSQTCDNTPGSYHCSCKIGFAMLTNKKDCKDVDECSLKPSVCGTAVCKNIPGDFECECPNGYRYDPSSKSCKDVDECSENTCAQLCVNYPGGYSCYCDGKKGFKLAQDQRSCEGIPVCLSLDLDKNYELLYLAEQFAGVVLYLKFRLPDITRFSAEFDFRTYDSEGIILYAESLDHSNWLLIALREGKIEVQFKNEFSTQITTGGNVINNGIWNMVSVEELDDSVSIKIAKEAVMNINKLGSLFKPTDGFLDTKIYFAGLPRKVESALIKPINPRLDGCIRGWNLMKQGALGAKEIVEGKQNKHCFLTVEKGSYYPGSGIAQFSIDYNNVTNAEGWQINVTLNIRPSTGTGVMLALVSGDTVPFALSLVDSGSGTSQDILVFVENSVAAHLEAITLCSEQPSQLKCNINRNGLELWTPVRKDVIYSKDLQRQLAILDKTMKGTVATYLGGVPDISFSATPVNAFYSGCMEVNINGVQLDLDEAISKHNDIRAHSCPSVRKIQKNF</sequence>